<comment type="function">
    <text evidence="1">Involved in heme (porphyrin) scavenging. Binds Fe(2+) and Fe(3+) heme but the largest fraction is Fe(2+) heme. Functions as a high-affinity heme binding protein and probably has a role in relaying heme-iron from cell wall-anchored isd proteins receptors to the probable permease IsdF (By similarity).</text>
</comment>
<comment type="cofactor">
    <cofactor evidence="1">
        <name>heme b</name>
        <dbReference type="ChEBI" id="CHEBI:60344"/>
    </cofactor>
    <text evidence="1">Binds 1 heme b (iron(II)-protoporphyrin IX) group per subunit.</text>
</comment>
<comment type="subcellular location">
    <subcellularLocation>
        <location evidence="2">Cell membrane</location>
        <topology evidence="2">Lipid-anchor</topology>
    </subcellularLocation>
</comment>
<comment type="induction">
    <text evidence="1">Repressed by fur in the presence of iron.</text>
</comment>
<comment type="similarity">
    <text evidence="4">Belongs to the bacterial solute-binding protein 8 family.</text>
</comment>
<name>ISDE_STAA1</name>
<evidence type="ECO:0000250" key="1"/>
<evidence type="ECO:0000255" key="2">
    <source>
        <dbReference type="PROSITE-ProRule" id="PRU00303"/>
    </source>
</evidence>
<evidence type="ECO:0000255" key="3">
    <source>
        <dbReference type="PROSITE-ProRule" id="PRU00344"/>
    </source>
</evidence>
<evidence type="ECO:0000305" key="4"/>
<organism>
    <name type="scientific">Staphylococcus aureus (strain Mu3 / ATCC 700698)</name>
    <dbReference type="NCBI Taxonomy" id="418127"/>
    <lineage>
        <taxon>Bacteria</taxon>
        <taxon>Bacillati</taxon>
        <taxon>Bacillota</taxon>
        <taxon>Bacilli</taxon>
        <taxon>Bacillales</taxon>
        <taxon>Staphylococcaceae</taxon>
        <taxon>Staphylococcus</taxon>
    </lineage>
</organism>
<sequence length="292" mass="33271">MRIIKYLTILVISVVILTSCQSSSSQESTKSGEFRIVPTTVALTMTLDKLDLPIVGKPTSYKTLPNRYKDVPEIGQPMEPNVEAVKKLKPTHVLSVSTIKDEMQPFYKQLNMKGYFYDFDSLKGMQKSITQLGDQFNRKAQAKELNDHLNSVKQKIENKAAKQKKHPKVLILMGVPGSYLVATDKSYIGDLVKIAGGENVIKVKDRQYISSNTENLLNINPDIILRLPHGMPEEVKKMFQKEFKQNDIWKHFKAVKNNHVYDLEEVPFGITANVDADKAMTQLYDLFYKDKK</sequence>
<proteinExistence type="inferred from homology"/>
<gene>
    <name type="primary">isdE</name>
    <name type="synonym">sirF</name>
    <name type="ordered locus">SAHV_1124</name>
</gene>
<accession>A7X153</accession>
<reference key="1">
    <citation type="journal article" date="2008" name="Antimicrob. Agents Chemother.">
        <title>Mutated response regulator graR is responsible for phenotypic conversion of Staphylococcus aureus from heterogeneous vancomycin-intermediate resistance to vancomycin-intermediate resistance.</title>
        <authorList>
            <person name="Neoh H.-M."/>
            <person name="Cui L."/>
            <person name="Yuzawa H."/>
            <person name="Takeuchi F."/>
            <person name="Matsuo M."/>
            <person name="Hiramatsu K."/>
        </authorList>
    </citation>
    <scope>NUCLEOTIDE SEQUENCE [LARGE SCALE GENOMIC DNA]</scope>
    <source>
        <strain>Mu3 / ATCC 700698</strain>
    </source>
</reference>
<protein>
    <recommendedName>
        <fullName>High-affinity heme uptake system protein IsdE</fullName>
    </recommendedName>
    <alternativeName>
        <fullName>Iron-regulated surface determinant protein E</fullName>
    </alternativeName>
    <alternativeName>
        <fullName>Staphylococcal iron-regulated protein F</fullName>
    </alternativeName>
</protein>
<dbReference type="EMBL" id="AP009324">
    <property type="protein sequence ID" value="BAF78007.1"/>
    <property type="molecule type" value="Genomic_DNA"/>
</dbReference>
<dbReference type="RefSeq" id="WP_001220199.1">
    <property type="nucleotide sequence ID" value="NZ_CTYB01000027.1"/>
</dbReference>
<dbReference type="SMR" id="A7X153"/>
<dbReference type="KEGG" id="saw:SAHV_1124"/>
<dbReference type="HOGENOM" id="CLU_038034_2_3_9"/>
<dbReference type="GO" id="GO:0005886">
    <property type="term" value="C:plasma membrane"/>
    <property type="evidence" value="ECO:0007669"/>
    <property type="project" value="UniProtKB-SubCell"/>
</dbReference>
<dbReference type="GO" id="GO:0020037">
    <property type="term" value="F:heme binding"/>
    <property type="evidence" value="ECO:0007669"/>
    <property type="project" value="InterPro"/>
</dbReference>
<dbReference type="GO" id="GO:0046872">
    <property type="term" value="F:metal ion binding"/>
    <property type="evidence" value="ECO:0007669"/>
    <property type="project" value="UniProtKB-KW"/>
</dbReference>
<dbReference type="GO" id="GO:0071281">
    <property type="term" value="P:cellular response to iron ion"/>
    <property type="evidence" value="ECO:0007669"/>
    <property type="project" value="TreeGrafter"/>
</dbReference>
<dbReference type="GO" id="GO:0015886">
    <property type="term" value="P:heme transport"/>
    <property type="evidence" value="ECO:0007669"/>
    <property type="project" value="InterPro"/>
</dbReference>
<dbReference type="FunFam" id="3.40.50.1980:FF:000022">
    <property type="entry name" value="Heme ABC transporter substrate-binding protein IsdE"/>
    <property type="match status" value="1"/>
</dbReference>
<dbReference type="FunFam" id="3.40.50.1980:FF:000031">
    <property type="entry name" value="High-affinity heme uptake system protein IsdE"/>
    <property type="match status" value="1"/>
</dbReference>
<dbReference type="Gene3D" id="3.40.50.1980">
    <property type="entry name" value="Nitrogenase molybdenum iron protein domain"/>
    <property type="match status" value="2"/>
</dbReference>
<dbReference type="InterPro" id="IPR050902">
    <property type="entry name" value="ABC_Transporter_SBP"/>
</dbReference>
<dbReference type="InterPro" id="IPR019957">
    <property type="entry name" value="ABC_transptr_haem-bd_IsdE"/>
</dbReference>
<dbReference type="InterPro" id="IPR002491">
    <property type="entry name" value="ABC_transptr_periplasmic_BD"/>
</dbReference>
<dbReference type="NCBIfam" id="TIGR03659">
    <property type="entry name" value="IsdE"/>
    <property type="match status" value="1"/>
</dbReference>
<dbReference type="PANTHER" id="PTHR30535:SF36">
    <property type="entry name" value="HIGH-AFFINITY HEME UPTAKE SYSTEM PROTEIN ISDE"/>
    <property type="match status" value="1"/>
</dbReference>
<dbReference type="PANTHER" id="PTHR30535">
    <property type="entry name" value="VITAMIN B12-BINDING PROTEIN"/>
    <property type="match status" value="1"/>
</dbReference>
<dbReference type="Pfam" id="PF01497">
    <property type="entry name" value="Peripla_BP_2"/>
    <property type="match status" value="1"/>
</dbReference>
<dbReference type="SUPFAM" id="SSF53807">
    <property type="entry name" value="Helical backbone' metal receptor"/>
    <property type="match status" value="1"/>
</dbReference>
<dbReference type="PROSITE" id="PS50983">
    <property type="entry name" value="FE_B12_PBP"/>
    <property type="match status" value="1"/>
</dbReference>
<dbReference type="PROSITE" id="PS51257">
    <property type="entry name" value="PROKAR_LIPOPROTEIN"/>
    <property type="match status" value="1"/>
</dbReference>
<feature type="signal peptide" evidence="2">
    <location>
        <begin position="1"/>
        <end position="19"/>
    </location>
</feature>
<feature type="chain" id="PRO_0000326211" description="High-affinity heme uptake system protein IsdE">
    <location>
        <begin position="20"/>
        <end position="292"/>
    </location>
</feature>
<feature type="domain" description="Fe/B12 periplasmic-binding" evidence="3">
    <location>
        <begin position="35"/>
        <end position="291"/>
    </location>
</feature>
<feature type="binding site" evidence="1">
    <location>
        <position position="41"/>
    </location>
    <ligand>
        <name>heme</name>
        <dbReference type="ChEBI" id="CHEBI:30413"/>
    </ligand>
</feature>
<feature type="binding site" evidence="1">
    <location>
        <position position="42"/>
    </location>
    <ligand>
        <name>heme</name>
        <dbReference type="ChEBI" id="CHEBI:30413"/>
    </ligand>
</feature>
<feature type="binding site" evidence="1">
    <location>
        <position position="60"/>
    </location>
    <ligand>
        <name>heme</name>
        <dbReference type="ChEBI" id="CHEBI:30413"/>
    </ligand>
</feature>
<feature type="binding site" evidence="1">
    <location>
        <position position="61"/>
    </location>
    <ligand>
        <name>heme</name>
        <dbReference type="ChEBI" id="CHEBI:30413"/>
    </ligand>
</feature>
<feature type="binding site" description="axial binding residue" evidence="1">
    <location>
        <position position="78"/>
    </location>
    <ligand>
        <name>heme</name>
        <dbReference type="ChEBI" id="CHEBI:30413"/>
    </ligand>
    <ligandPart>
        <name>Fe</name>
        <dbReference type="ChEBI" id="CHEBI:18248"/>
    </ligandPart>
</feature>
<feature type="binding site" description="axial binding residue" evidence="1">
    <location>
        <position position="229"/>
    </location>
    <ligand>
        <name>heme</name>
        <dbReference type="ChEBI" id="CHEBI:30413"/>
    </ligand>
    <ligandPart>
        <name>Fe</name>
        <dbReference type="ChEBI" id="CHEBI:18248"/>
    </ligandPart>
</feature>
<feature type="lipid moiety-binding region" description="N-palmitoyl cysteine" evidence="2">
    <location>
        <position position="20"/>
    </location>
</feature>
<feature type="lipid moiety-binding region" description="S-diacylglycerol cysteine" evidence="2">
    <location>
        <position position="20"/>
    </location>
</feature>
<keyword id="KW-1003">Cell membrane</keyword>
<keyword id="KW-0349">Heme</keyword>
<keyword id="KW-0408">Iron</keyword>
<keyword id="KW-0449">Lipoprotein</keyword>
<keyword id="KW-0472">Membrane</keyword>
<keyword id="KW-0479">Metal-binding</keyword>
<keyword id="KW-0564">Palmitate</keyword>
<keyword id="KW-0732">Signal</keyword>
<keyword id="KW-0813">Transport</keyword>